<name>AFT2_YEAST</name>
<proteinExistence type="evidence at protein level"/>
<evidence type="ECO:0000269" key="1">
    <source>
    </source>
</evidence>
<evidence type="ECO:0000269" key="2">
    <source>
    </source>
</evidence>
<evidence type="ECO:0000269" key="3">
    <source>
    </source>
</evidence>
<evidence type="ECO:0000269" key="4">
    <source>
    </source>
</evidence>
<evidence type="ECO:0000269" key="5">
    <source>
    </source>
</evidence>
<evidence type="ECO:0000269" key="6">
    <source>
    </source>
</evidence>
<evidence type="ECO:0000303" key="7">
    <source>
    </source>
</evidence>
<evidence type="ECO:0000305" key="8"/>
<evidence type="ECO:0007744" key="9">
    <source>
        <dbReference type="PDB" id="4LMG"/>
    </source>
</evidence>
<evidence type="ECO:0007829" key="10">
    <source>
        <dbReference type="PDB" id="4LMG"/>
    </source>
</evidence>
<feature type="chain" id="PRO_0000227599" description="Iron-regulated transcriptional activator AFT2">
    <location>
        <begin position="1"/>
        <end position="416"/>
    </location>
</feature>
<feature type="short sequence motif" description="CDC [2Fe-2S] cluster binding motif" evidence="6">
    <location>
        <begin position="187"/>
        <end position="189"/>
    </location>
</feature>
<feature type="binding site" evidence="6 9">
    <location>
        <position position="53"/>
    </location>
    <ligand>
        <name>Zn(2+)</name>
        <dbReference type="ChEBI" id="CHEBI:29105"/>
        <label>1</label>
    </ligand>
</feature>
<feature type="binding site" evidence="6 9">
    <location>
        <position position="54"/>
    </location>
    <ligand>
        <name>DNA</name>
        <dbReference type="ChEBI" id="CHEBI:16991"/>
    </ligand>
</feature>
<feature type="binding site" evidence="6 9">
    <location>
        <position position="55"/>
    </location>
    <ligand>
        <name>DNA</name>
        <dbReference type="ChEBI" id="CHEBI:16991"/>
    </ligand>
</feature>
<feature type="binding site" evidence="6 9">
    <location>
        <position position="55"/>
    </location>
    <ligand>
        <name>Zn(2+)</name>
        <dbReference type="ChEBI" id="CHEBI:29105"/>
        <label>1</label>
    </ligand>
</feature>
<feature type="binding site" evidence="6 9">
    <location>
        <position position="58"/>
    </location>
    <ligand>
        <name>DNA</name>
        <dbReference type="ChEBI" id="CHEBI:16991"/>
    </ligand>
</feature>
<feature type="binding site" evidence="6 9">
    <location>
        <position position="74"/>
    </location>
    <ligand>
        <name>DNA</name>
        <dbReference type="ChEBI" id="CHEBI:16991"/>
    </ligand>
</feature>
<feature type="binding site" evidence="6 9">
    <location>
        <position position="75"/>
    </location>
    <ligand>
        <name>DNA</name>
        <dbReference type="ChEBI" id="CHEBI:16991"/>
    </ligand>
</feature>
<feature type="binding site" evidence="6 9">
    <location>
        <position position="76"/>
    </location>
    <ligand>
        <name>DNA</name>
        <dbReference type="ChEBI" id="CHEBI:16991"/>
    </ligand>
</feature>
<feature type="binding site" evidence="6 9">
    <location>
        <position position="77"/>
    </location>
    <ligand>
        <name>DNA</name>
        <dbReference type="ChEBI" id="CHEBI:16991"/>
    </ligand>
</feature>
<feature type="binding site" evidence="6 9">
    <location>
        <position position="78"/>
    </location>
    <ligand>
        <name>DNA</name>
        <dbReference type="ChEBI" id="CHEBI:16991"/>
    </ligand>
</feature>
<feature type="binding site" evidence="6 9">
    <location>
        <position position="81"/>
    </location>
    <ligand>
        <name>DNA</name>
        <dbReference type="ChEBI" id="CHEBI:16991"/>
    </ligand>
</feature>
<feature type="binding site" evidence="6 9">
    <location>
        <position position="86"/>
    </location>
    <ligand>
        <name>Zn(2+)</name>
        <dbReference type="ChEBI" id="CHEBI:29105"/>
        <label>2</label>
    </ligand>
</feature>
<feature type="binding site" evidence="6 9">
    <location>
        <position position="88"/>
    </location>
    <ligand>
        <name>DNA</name>
        <dbReference type="ChEBI" id="CHEBI:16991"/>
    </ligand>
</feature>
<feature type="binding site" evidence="6 9">
    <location>
        <position position="109"/>
    </location>
    <ligand>
        <name>Zn(2+)</name>
        <dbReference type="ChEBI" id="CHEBI:29105"/>
        <label>2</label>
    </ligand>
</feature>
<feature type="binding site" evidence="6 9">
    <location>
        <position position="119"/>
    </location>
    <ligand>
        <name>DNA</name>
        <dbReference type="ChEBI" id="CHEBI:16991"/>
    </ligand>
</feature>
<feature type="binding site" evidence="6 9">
    <location>
        <position position="120"/>
    </location>
    <ligand>
        <name>DNA</name>
        <dbReference type="ChEBI" id="CHEBI:16991"/>
    </ligand>
</feature>
<feature type="binding site" evidence="6 9">
    <location>
        <position position="133"/>
    </location>
    <ligand>
        <name>Zn(2+)</name>
        <dbReference type="ChEBI" id="CHEBI:29105"/>
        <label>2</label>
    </ligand>
</feature>
<feature type="binding site" evidence="6 9">
    <location>
        <position position="135"/>
    </location>
    <ligand>
        <name>Zn(2+)</name>
        <dbReference type="ChEBI" id="CHEBI:29105"/>
        <label>2</label>
    </ligand>
</feature>
<feature type="binding site" evidence="6 9">
    <location>
        <position position="157"/>
    </location>
    <ligand>
        <name>DNA</name>
        <dbReference type="ChEBI" id="CHEBI:16991"/>
    </ligand>
</feature>
<feature type="binding site" evidence="6 9">
    <location>
        <position position="159"/>
    </location>
    <ligand>
        <name>DNA</name>
        <dbReference type="ChEBI" id="CHEBI:16991"/>
    </ligand>
</feature>
<feature type="mutagenesis site" description="Impairs domerization in the presence of Fe(2+) or a [2Fe-2S] cluster." evidence="6">
    <original>C</original>
    <variation>A</variation>
    <location>
        <position position="187"/>
    </location>
</feature>
<feature type="helix" evidence="10">
    <location>
        <begin position="54"/>
        <end position="56"/>
    </location>
</feature>
<feature type="helix" evidence="10">
    <location>
        <begin position="57"/>
        <end position="65"/>
    </location>
</feature>
<feature type="helix" evidence="10">
    <location>
        <begin position="66"/>
        <end position="68"/>
    </location>
</feature>
<feature type="strand" evidence="10">
    <location>
        <begin position="72"/>
        <end position="78"/>
    </location>
</feature>
<feature type="strand" evidence="10">
    <location>
        <begin position="81"/>
        <end position="86"/>
    </location>
</feature>
<feature type="strand" evidence="10">
    <location>
        <begin position="112"/>
        <end position="118"/>
    </location>
</feature>
<feature type="turn" evidence="10">
    <location>
        <begin position="119"/>
        <end position="122"/>
    </location>
</feature>
<feature type="strand" evidence="10">
    <location>
        <begin position="123"/>
        <end position="129"/>
    </location>
</feature>
<feature type="helix" evidence="10">
    <location>
        <begin position="139"/>
        <end position="142"/>
    </location>
</feature>
<feature type="helix" evidence="10">
    <location>
        <begin position="146"/>
        <end position="157"/>
    </location>
</feature>
<feature type="helix" evidence="10">
    <location>
        <begin position="161"/>
        <end position="175"/>
    </location>
</feature>
<comment type="function">
    <text evidence="1 2 3 4 5 6">Transcription factor required for iron homeostasis and resistance to oxidative stress (PubMed:11448968, PubMed:11734641, PubMed:12756250, PubMed:15649888, PubMed:16024809). With AFT1, activates the gene expression in response to low-iron conditions, also called iron regulon (PubMed:11448968, PubMed:11734641, PubMed:12756250, PubMed:15649888, PubMed:16024809, PubMed:24591629). Recognizes the consensus iron-responsive element (Fe-RE) sequence 5'-CACCC-3' in the promoters of target genes (PubMed:24591629). The transcription activation by AFT1 and AFT2 depends on the mitochondrial iron-sulfur protein biosynthesis pathway (PubMed:15649888). In high iron condition, the presence of iron leads to dimerization, which in turn leads to a decrease in DNA affinity (PubMed:24591629).</text>
</comment>
<comment type="activity regulation">
    <text evidence="6">Dimerization via the binding of Fe(2+) or a [2Fe-2S] cluster decreases the DNA-binding activity.</text>
</comment>
<comment type="subunit">
    <text evidence="6">Homodimer (PubMed:24591629). Dimerization decreases the DNA-binding activity (PubMed:24591629).</text>
</comment>
<comment type="subcellular location">
    <subcellularLocation>
        <location evidence="8">Nucleus</location>
    </subcellularLocation>
</comment>
<comment type="domain">
    <text evidence="6">The CDC motif is involved in iron-sensong via binding to Fe(2+) or [2Fe-2S] cluster, which leads to dimerization and loss of DNA-binding.</text>
</comment>
<reference key="1">
    <citation type="journal article" date="1997" name="Nature">
        <title>The nucleotide sequence of Saccharomyces cerevisiae chromosome XVI.</title>
        <authorList>
            <person name="Bussey H."/>
            <person name="Storms R.K."/>
            <person name="Ahmed A."/>
            <person name="Albermann K."/>
            <person name="Allen E."/>
            <person name="Ansorge W."/>
            <person name="Araujo R."/>
            <person name="Aparicio A."/>
            <person name="Barrell B.G."/>
            <person name="Badcock K."/>
            <person name="Benes V."/>
            <person name="Botstein D."/>
            <person name="Bowman S."/>
            <person name="Brueckner M."/>
            <person name="Carpenter J."/>
            <person name="Cherry J.M."/>
            <person name="Chung E."/>
            <person name="Churcher C.M."/>
            <person name="Coster F."/>
            <person name="Davis K."/>
            <person name="Davis R.W."/>
            <person name="Dietrich F.S."/>
            <person name="Delius H."/>
            <person name="DiPaolo T."/>
            <person name="Dubois E."/>
            <person name="Duesterhoeft A."/>
            <person name="Duncan M."/>
            <person name="Floeth M."/>
            <person name="Fortin N."/>
            <person name="Friesen J.D."/>
            <person name="Fritz C."/>
            <person name="Goffeau A."/>
            <person name="Hall J."/>
            <person name="Hebling U."/>
            <person name="Heumann K."/>
            <person name="Hilbert H."/>
            <person name="Hillier L.W."/>
            <person name="Hunicke-Smith S."/>
            <person name="Hyman R.W."/>
            <person name="Johnston M."/>
            <person name="Kalman S."/>
            <person name="Kleine K."/>
            <person name="Komp C."/>
            <person name="Kurdi O."/>
            <person name="Lashkari D."/>
            <person name="Lew H."/>
            <person name="Lin A."/>
            <person name="Lin D."/>
            <person name="Louis E.J."/>
            <person name="Marathe R."/>
            <person name="Messenguy F."/>
            <person name="Mewes H.-W."/>
            <person name="Mirtipati S."/>
            <person name="Moestl D."/>
            <person name="Mueller-Auer S."/>
            <person name="Namath A."/>
            <person name="Nentwich U."/>
            <person name="Oefner P."/>
            <person name="Pearson D."/>
            <person name="Petel F.X."/>
            <person name="Pohl T.M."/>
            <person name="Purnelle B."/>
            <person name="Rajandream M.A."/>
            <person name="Rechmann S."/>
            <person name="Rieger M."/>
            <person name="Riles L."/>
            <person name="Roberts D."/>
            <person name="Schaefer M."/>
            <person name="Scharfe M."/>
            <person name="Scherens B."/>
            <person name="Schramm S."/>
            <person name="Schroeder M."/>
            <person name="Sdicu A.-M."/>
            <person name="Tettelin H."/>
            <person name="Urrestarazu L.A."/>
            <person name="Ushinsky S."/>
            <person name="Vierendeels F."/>
            <person name="Vissers S."/>
            <person name="Voss H."/>
            <person name="Walsh S.V."/>
            <person name="Wambutt R."/>
            <person name="Wang Y."/>
            <person name="Wedler E."/>
            <person name="Wedler H."/>
            <person name="Winnett E."/>
            <person name="Zhong W.-W."/>
            <person name="Zollner A."/>
            <person name="Vo D.H."/>
            <person name="Hani J."/>
        </authorList>
    </citation>
    <scope>NUCLEOTIDE SEQUENCE [LARGE SCALE GENOMIC DNA]</scope>
    <source>
        <strain>ATCC 204508 / S288c</strain>
    </source>
</reference>
<reference key="2">
    <citation type="journal article" date="2014" name="G3 (Bethesda)">
        <title>The reference genome sequence of Saccharomyces cerevisiae: Then and now.</title>
        <authorList>
            <person name="Engel S.R."/>
            <person name="Dietrich F.S."/>
            <person name="Fisk D.G."/>
            <person name="Binkley G."/>
            <person name="Balakrishnan R."/>
            <person name="Costanzo M.C."/>
            <person name="Dwight S.S."/>
            <person name="Hitz B.C."/>
            <person name="Karra K."/>
            <person name="Nash R.S."/>
            <person name="Weng S."/>
            <person name="Wong E.D."/>
            <person name="Lloyd P."/>
            <person name="Skrzypek M.S."/>
            <person name="Miyasato S.R."/>
            <person name="Simison M."/>
            <person name="Cherry J.M."/>
        </authorList>
    </citation>
    <scope>GENOME REANNOTATION</scope>
    <source>
        <strain>ATCC 204508 / S288c</strain>
    </source>
</reference>
<reference key="3">
    <citation type="journal article" date="2001" name="J. Biol. Chem.">
        <title>Aft2p, a novel iron-regulated transcription activator that modulates, with Aft1p, intracellular iron use and resistance to oxidative stress in yeast.</title>
        <authorList>
            <person name="Blaiseau P.-L."/>
            <person name="Lesuisse E."/>
            <person name="Camadro J.-M."/>
        </authorList>
    </citation>
    <scope>FUNCTION</scope>
</reference>
<reference key="4">
    <citation type="journal article" date="2001" name="Proc. Natl. Acad. Sci. U.S.A.">
        <title>A second iron-regulatory system in yeast independent of Aft1p.</title>
        <authorList>
            <person name="Rutherford J.C."/>
            <person name="Jaron S."/>
            <person name="Ray E."/>
            <person name="Brown P.O."/>
            <person name="Winge D.R."/>
        </authorList>
    </citation>
    <scope>FUNCTION</scope>
</reference>
<reference key="5">
    <citation type="journal article" date="2003" name="J. Biol. Chem.">
        <title>Aft1p and Aft2p mediate iron-responsive gene expression in yeast through related promoter elements.</title>
        <authorList>
            <person name="Rutherford J.C."/>
            <person name="Jaron S."/>
            <person name="Winge D.R."/>
        </authorList>
    </citation>
    <scope>FUNCTION</scope>
</reference>
<reference key="6">
    <citation type="journal article" date="2005" name="J. Biol. Chem.">
        <title>Activation of the iron regulon by the yeast Aft1/Aft2 transcription factors depends on mitochondrial but not cytosolic iron-sulfur protein biogenesis.</title>
        <authorList>
            <person name="Rutherford J.C."/>
            <person name="Ojeda L."/>
            <person name="Balk J."/>
            <person name="Muehlenhoff U."/>
            <person name="Lill R."/>
            <person name="Winge D.R."/>
        </authorList>
    </citation>
    <scope>FUNCTION</scope>
</reference>
<reference key="7">
    <citation type="journal article" date="2005" name="Mol. Cell. Biol.">
        <title>Direct activation of genes involved in intracellular iron use by the yeast iron-responsive transcription factor Aft2 without its paralog Aft1.</title>
        <authorList>
            <person name="Courel M."/>
            <person name="Lallet S."/>
            <person name="Camadro J.-M."/>
            <person name="Blaiseau P.-L."/>
        </authorList>
    </citation>
    <scope>FUNCTION</scope>
</reference>
<reference evidence="9" key="8">
    <citation type="journal article" date="2014" name="Proc. Natl. Acad. Sci. U.S.A.">
        <title>Molecular mechanism and structure of the Saccharomyces cerevisiae iron regulator Aft2.</title>
        <authorList>
            <person name="Poor C.B."/>
            <person name="Wegner S.V."/>
            <person name="Li H."/>
            <person name="Dlouhy A.C."/>
            <person name="Schuermann J.P."/>
            <person name="Sanishvili R."/>
            <person name="Hinshaw J.R."/>
            <person name="Riggs-Gelasco P.J."/>
            <person name="Outten C.E."/>
            <person name="He C."/>
        </authorList>
    </citation>
    <scope>X-RAY CRYSTALLOGRAPHY (2.20 ANGSTROMS) OF 38-193 IN COMPLEX WITH ZN(2+) AND DNA</scope>
    <scope>FUNCTION</scope>
    <scope>ACTIVITY REGULATION</scope>
    <scope>SUBUNIT</scope>
    <scope>MUTAGENESIS OF CYS-187</scope>
</reference>
<protein>
    <recommendedName>
        <fullName evidence="7">Iron-regulated transcriptional activator AFT2</fullName>
    </recommendedName>
    <alternativeName>
        <fullName evidence="7">Activator of iron transcription protein 2</fullName>
    </alternativeName>
</protein>
<gene>
    <name evidence="7" type="primary">AFT2</name>
    <name type="ordered locus">YPL202C</name>
</gene>
<sequence>MKAKSMKSIISVPISVSKTGKMKLTASPDNLASMMSKDQNKLIHLDPVPSFEDRHEIKPWLQKIFYPQGIDIVIERSDSSKVTFKCRSVRSKVGLNPKSKGSSSRSHACPFRIRAAYSVRLQKWNVVVMNNIHSHELRFDLITKTDDYKKFKENLRQKNDEKAIKTFDELEYKASLNLPLVTPIISCDCGLTKEIEAFNNIFLPLSNPPLTSKKNLLKTNKNSVSKIKSRQMDNSKPRPRLKTKLDADLHDTGFLDNFKTRNSCVKIEKEDSLTNLNEIDFTNMFCNDNFIQNYNQGLMELLTEPTPGPSSSSCILPSTPTRPLSQSKMDIALSESTTSSPNFMETDAPYGDEIIKVSKDTKSNAPTADTDIATNLGKERNENFGMLNYNYEALLHFNDEHFNELNSIDPALISKY</sequence>
<accession>Q08957</accession>
<accession>D6W3G7</accession>
<organism>
    <name type="scientific">Saccharomyces cerevisiae (strain ATCC 204508 / S288c)</name>
    <name type="common">Baker's yeast</name>
    <dbReference type="NCBI Taxonomy" id="559292"/>
    <lineage>
        <taxon>Eukaryota</taxon>
        <taxon>Fungi</taxon>
        <taxon>Dikarya</taxon>
        <taxon>Ascomycota</taxon>
        <taxon>Saccharomycotina</taxon>
        <taxon>Saccharomycetes</taxon>
        <taxon>Saccharomycetales</taxon>
        <taxon>Saccharomycetaceae</taxon>
        <taxon>Saccharomyces</taxon>
    </lineage>
</organism>
<keyword id="KW-0002">3D-structure</keyword>
<keyword id="KW-0010">Activator</keyword>
<keyword id="KW-0408">Iron</keyword>
<keyword id="KW-0539">Nucleus</keyword>
<keyword id="KW-1185">Reference proteome</keyword>
<keyword id="KW-0804">Transcription</keyword>
<keyword id="KW-0805">Transcription regulation</keyword>
<dbReference type="EMBL" id="Z73558">
    <property type="protein sequence ID" value="CAA97916.1"/>
    <property type="molecule type" value="Genomic_DNA"/>
</dbReference>
<dbReference type="EMBL" id="BK006949">
    <property type="protein sequence ID" value="DAA11233.1"/>
    <property type="molecule type" value="Genomic_DNA"/>
</dbReference>
<dbReference type="PIR" id="S65221">
    <property type="entry name" value="S65221"/>
</dbReference>
<dbReference type="RefSeq" id="NP_015122.1">
    <property type="nucleotide sequence ID" value="NM_001184016.1"/>
</dbReference>
<dbReference type="PDB" id="4LMG">
    <property type="method" value="X-ray"/>
    <property type="resolution" value="2.20 A"/>
    <property type="chains" value="A/B/C/D=38-193"/>
</dbReference>
<dbReference type="PDBsum" id="4LMG"/>
<dbReference type="SMR" id="Q08957"/>
<dbReference type="BioGRID" id="35982">
    <property type="interactions" value="65"/>
</dbReference>
<dbReference type="FunCoup" id="Q08957">
    <property type="interactions" value="528"/>
</dbReference>
<dbReference type="MINT" id="Q08957"/>
<dbReference type="STRING" id="4932.YPL202C"/>
<dbReference type="GlyGen" id="Q08957">
    <property type="glycosylation" value="1 site"/>
</dbReference>
<dbReference type="iPTMnet" id="Q08957"/>
<dbReference type="PaxDb" id="4932-YPL202C"/>
<dbReference type="PeptideAtlas" id="Q08957"/>
<dbReference type="EnsemblFungi" id="YPL202C_mRNA">
    <property type="protein sequence ID" value="YPL202C"/>
    <property type="gene ID" value="YPL202C"/>
</dbReference>
<dbReference type="GeneID" id="855899"/>
<dbReference type="KEGG" id="sce:YPL202C"/>
<dbReference type="AGR" id="SGD:S000006123"/>
<dbReference type="SGD" id="S000006123">
    <property type="gene designation" value="AFT2"/>
</dbReference>
<dbReference type="VEuPathDB" id="FungiDB:YPL202C"/>
<dbReference type="eggNOG" id="ENOG502S28S">
    <property type="taxonomic scope" value="Eukaryota"/>
</dbReference>
<dbReference type="GeneTree" id="ENSGT00940000176694"/>
<dbReference type="HOGENOM" id="CLU_674652_0_0_1"/>
<dbReference type="InParanoid" id="Q08957"/>
<dbReference type="OrthoDB" id="4068596at2759"/>
<dbReference type="BioCyc" id="YEAST:G3O-34094-MONOMER"/>
<dbReference type="BioGRID-ORCS" id="855899">
    <property type="hits" value="0 hits in 13 CRISPR screens"/>
</dbReference>
<dbReference type="EvolutionaryTrace" id="Q08957"/>
<dbReference type="PRO" id="PR:Q08957"/>
<dbReference type="Proteomes" id="UP000002311">
    <property type="component" value="Chromosome XVI"/>
</dbReference>
<dbReference type="RNAct" id="Q08957">
    <property type="molecule type" value="protein"/>
</dbReference>
<dbReference type="GO" id="GO:0005739">
    <property type="term" value="C:mitochondrion"/>
    <property type="evidence" value="ECO:0007005"/>
    <property type="project" value="SGD"/>
</dbReference>
<dbReference type="GO" id="GO:0005634">
    <property type="term" value="C:nucleus"/>
    <property type="evidence" value="ECO:0007669"/>
    <property type="project" value="UniProtKB-SubCell"/>
</dbReference>
<dbReference type="GO" id="GO:0000981">
    <property type="term" value="F:DNA-binding transcription factor activity, RNA polymerase II-specific"/>
    <property type="evidence" value="ECO:0000314"/>
    <property type="project" value="SGD"/>
</dbReference>
<dbReference type="GO" id="GO:0051536">
    <property type="term" value="F:iron-sulfur cluster binding"/>
    <property type="evidence" value="ECO:0000315"/>
    <property type="project" value="SGD"/>
</dbReference>
<dbReference type="GO" id="GO:0000978">
    <property type="term" value="F:RNA polymerase II cis-regulatory region sequence-specific DNA binding"/>
    <property type="evidence" value="ECO:0000314"/>
    <property type="project" value="SGD"/>
</dbReference>
<dbReference type="GO" id="GO:0032048">
    <property type="term" value="P:cardiolipin metabolic process"/>
    <property type="evidence" value="ECO:0000315"/>
    <property type="project" value="SGD"/>
</dbReference>
<dbReference type="GO" id="GO:0010106">
    <property type="term" value="P:cellular response to iron ion starvation"/>
    <property type="evidence" value="ECO:0000316"/>
    <property type="project" value="SGD"/>
</dbReference>
<dbReference type="GO" id="GO:0006879">
    <property type="term" value="P:intracellular iron ion homeostasis"/>
    <property type="evidence" value="ECO:0000316"/>
    <property type="project" value="SGD"/>
</dbReference>
<dbReference type="GO" id="GO:0045944">
    <property type="term" value="P:positive regulation of transcription by RNA polymerase II"/>
    <property type="evidence" value="ECO:0000314"/>
    <property type="project" value="SGD"/>
</dbReference>
<dbReference type="GO" id="GO:2000185">
    <property type="term" value="P:regulation of phosphate transmembrane transport"/>
    <property type="evidence" value="ECO:0000315"/>
    <property type="project" value="SGD"/>
</dbReference>
<dbReference type="InterPro" id="IPR014842">
    <property type="entry name" value="AFT"/>
</dbReference>
<dbReference type="Pfam" id="PF08731">
    <property type="entry name" value="AFT"/>
    <property type="match status" value="1"/>
</dbReference>